<sequence>MRTQWPSPAKLNLFLYITGQRADGYHTLQTLFQFLDYGDTISIELRDDGDIRLLTPVEGVEHEDNLIVRAARLLMKTAADSGRLPTGSGANISIDKRLPMGGGLGGGSSNAATVLVALNHLWQCGLSMDELAEMGLTLGADVPVFVRGHAAFAEGVGEILTPVDPPEKWYLVAHPGVSIPTPVIFKDPELPRNTPKRSIETLLKCEFSNDCEVIARKRFREVDAVLSWLLEYAPSRLTGTGACVFAEFDTESEARQVLEQAPEWLNGFVAKGVNLSPLHRAML</sequence>
<comment type="function">
    <text evidence="1">Catalyzes the phosphorylation of the position 2 hydroxy group of 4-diphosphocytidyl-2C-methyl-D-erythritol.</text>
</comment>
<comment type="catalytic activity">
    <reaction evidence="1">
        <text>4-CDP-2-C-methyl-D-erythritol + ATP = 4-CDP-2-C-methyl-D-erythritol 2-phosphate + ADP + H(+)</text>
        <dbReference type="Rhea" id="RHEA:18437"/>
        <dbReference type="ChEBI" id="CHEBI:15378"/>
        <dbReference type="ChEBI" id="CHEBI:30616"/>
        <dbReference type="ChEBI" id="CHEBI:57823"/>
        <dbReference type="ChEBI" id="CHEBI:57919"/>
        <dbReference type="ChEBI" id="CHEBI:456216"/>
        <dbReference type="EC" id="2.7.1.148"/>
    </reaction>
</comment>
<comment type="pathway">
    <text evidence="1">Isoprenoid biosynthesis; isopentenyl diphosphate biosynthesis via DXP pathway; isopentenyl diphosphate from 1-deoxy-D-xylulose 5-phosphate: step 3/6.</text>
</comment>
<comment type="subunit">
    <text evidence="1">Homodimer.</text>
</comment>
<comment type="similarity">
    <text evidence="1">Belongs to the GHMP kinase family. IspE subfamily.</text>
</comment>
<gene>
    <name evidence="1" type="primary">ispE</name>
    <name type="ordered locus">ECIAI1_1229</name>
</gene>
<dbReference type="EC" id="2.7.1.148" evidence="1"/>
<dbReference type="EMBL" id="CU928160">
    <property type="protein sequence ID" value="CAQ98088.1"/>
    <property type="molecule type" value="Genomic_DNA"/>
</dbReference>
<dbReference type="RefSeq" id="WP_001260333.1">
    <property type="nucleotide sequence ID" value="NC_011741.1"/>
</dbReference>
<dbReference type="SMR" id="B7LXC3"/>
<dbReference type="GeneID" id="93775273"/>
<dbReference type="KEGG" id="ecr:ECIAI1_1229"/>
<dbReference type="HOGENOM" id="CLU_053057_3_0_6"/>
<dbReference type="UniPathway" id="UPA00056">
    <property type="reaction ID" value="UER00094"/>
</dbReference>
<dbReference type="GO" id="GO:0050515">
    <property type="term" value="F:4-(cytidine 5'-diphospho)-2-C-methyl-D-erythritol kinase activity"/>
    <property type="evidence" value="ECO:0007669"/>
    <property type="project" value="UniProtKB-UniRule"/>
</dbReference>
<dbReference type="GO" id="GO:0005524">
    <property type="term" value="F:ATP binding"/>
    <property type="evidence" value="ECO:0007669"/>
    <property type="project" value="UniProtKB-UniRule"/>
</dbReference>
<dbReference type="GO" id="GO:0019288">
    <property type="term" value="P:isopentenyl diphosphate biosynthetic process, methylerythritol 4-phosphate pathway"/>
    <property type="evidence" value="ECO:0007669"/>
    <property type="project" value="UniProtKB-UniRule"/>
</dbReference>
<dbReference type="GO" id="GO:0016114">
    <property type="term" value="P:terpenoid biosynthetic process"/>
    <property type="evidence" value="ECO:0007669"/>
    <property type="project" value="InterPro"/>
</dbReference>
<dbReference type="FunFam" id="3.30.230.10:FF:000022">
    <property type="entry name" value="4-diphosphocytidyl-2-C-methyl-D-erythritol kinase"/>
    <property type="match status" value="1"/>
</dbReference>
<dbReference type="FunFam" id="3.30.70.890:FF:000004">
    <property type="entry name" value="4-diphosphocytidyl-2-C-methyl-D-erythritol kinase"/>
    <property type="match status" value="1"/>
</dbReference>
<dbReference type="Gene3D" id="3.30.230.10">
    <property type="match status" value="1"/>
</dbReference>
<dbReference type="Gene3D" id="3.30.70.890">
    <property type="entry name" value="GHMP kinase, C-terminal domain"/>
    <property type="match status" value="1"/>
</dbReference>
<dbReference type="HAMAP" id="MF_00061">
    <property type="entry name" value="IspE"/>
    <property type="match status" value="1"/>
</dbReference>
<dbReference type="InterPro" id="IPR013750">
    <property type="entry name" value="GHMP_kinase_C_dom"/>
</dbReference>
<dbReference type="InterPro" id="IPR036554">
    <property type="entry name" value="GHMP_kinase_C_sf"/>
</dbReference>
<dbReference type="InterPro" id="IPR006204">
    <property type="entry name" value="GHMP_kinase_N_dom"/>
</dbReference>
<dbReference type="InterPro" id="IPR004424">
    <property type="entry name" value="IspE"/>
</dbReference>
<dbReference type="InterPro" id="IPR020568">
    <property type="entry name" value="Ribosomal_Su5_D2-typ_SF"/>
</dbReference>
<dbReference type="InterPro" id="IPR014721">
    <property type="entry name" value="Ribsml_uS5_D2-typ_fold_subgr"/>
</dbReference>
<dbReference type="NCBIfam" id="TIGR00154">
    <property type="entry name" value="ispE"/>
    <property type="match status" value="1"/>
</dbReference>
<dbReference type="PANTHER" id="PTHR43527">
    <property type="entry name" value="4-DIPHOSPHOCYTIDYL-2-C-METHYL-D-ERYTHRITOL KINASE, CHLOROPLASTIC"/>
    <property type="match status" value="1"/>
</dbReference>
<dbReference type="PANTHER" id="PTHR43527:SF2">
    <property type="entry name" value="4-DIPHOSPHOCYTIDYL-2-C-METHYL-D-ERYTHRITOL KINASE, CHLOROPLASTIC"/>
    <property type="match status" value="1"/>
</dbReference>
<dbReference type="Pfam" id="PF08544">
    <property type="entry name" value="GHMP_kinases_C"/>
    <property type="match status" value="1"/>
</dbReference>
<dbReference type="Pfam" id="PF00288">
    <property type="entry name" value="GHMP_kinases_N"/>
    <property type="match status" value="1"/>
</dbReference>
<dbReference type="PIRSF" id="PIRSF010376">
    <property type="entry name" value="IspE"/>
    <property type="match status" value="1"/>
</dbReference>
<dbReference type="SUPFAM" id="SSF55060">
    <property type="entry name" value="GHMP Kinase, C-terminal domain"/>
    <property type="match status" value="1"/>
</dbReference>
<dbReference type="SUPFAM" id="SSF54211">
    <property type="entry name" value="Ribosomal protein S5 domain 2-like"/>
    <property type="match status" value="1"/>
</dbReference>
<evidence type="ECO:0000255" key="1">
    <source>
        <dbReference type="HAMAP-Rule" id="MF_00061"/>
    </source>
</evidence>
<accession>B7LXC3</accession>
<name>ISPE_ECO8A</name>
<feature type="chain" id="PRO_1000116928" description="4-diphosphocytidyl-2-C-methyl-D-erythritol kinase">
    <location>
        <begin position="1"/>
        <end position="283"/>
    </location>
</feature>
<feature type="active site" evidence="1">
    <location>
        <position position="10"/>
    </location>
</feature>
<feature type="active site" evidence="1">
    <location>
        <position position="141"/>
    </location>
</feature>
<feature type="binding site" evidence="1">
    <location>
        <begin position="99"/>
        <end position="109"/>
    </location>
    <ligand>
        <name>ATP</name>
        <dbReference type="ChEBI" id="CHEBI:30616"/>
    </ligand>
</feature>
<organism>
    <name type="scientific">Escherichia coli O8 (strain IAI1)</name>
    <dbReference type="NCBI Taxonomy" id="585034"/>
    <lineage>
        <taxon>Bacteria</taxon>
        <taxon>Pseudomonadati</taxon>
        <taxon>Pseudomonadota</taxon>
        <taxon>Gammaproteobacteria</taxon>
        <taxon>Enterobacterales</taxon>
        <taxon>Enterobacteriaceae</taxon>
        <taxon>Escherichia</taxon>
    </lineage>
</organism>
<proteinExistence type="inferred from homology"/>
<reference key="1">
    <citation type="journal article" date="2009" name="PLoS Genet.">
        <title>Organised genome dynamics in the Escherichia coli species results in highly diverse adaptive paths.</title>
        <authorList>
            <person name="Touchon M."/>
            <person name="Hoede C."/>
            <person name="Tenaillon O."/>
            <person name="Barbe V."/>
            <person name="Baeriswyl S."/>
            <person name="Bidet P."/>
            <person name="Bingen E."/>
            <person name="Bonacorsi S."/>
            <person name="Bouchier C."/>
            <person name="Bouvet O."/>
            <person name="Calteau A."/>
            <person name="Chiapello H."/>
            <person name="Clermont O."/>
            <person name="Cruveiller S."/>
            <person name="Danchin A."/>
            <person name="Diard M."/>
            <person name="Dossat C."/>
            <person name="Karoui M.E."/>
            <person name="Frapy E."/>
            <person name="Garry L."/>
            <person name="Ghigo J.M."/>
            <person name="Gilles A.M."/>
            <person name="Johnson J."/>
            <person name="Le Bouguenec C."/>
            <person name="Lescat M."/>
            <person name="Mangenot S."/>
            <person name="Martinez-Jehanne V."/>
            <person name="Matic I."/>
            <person name="Nassif X."/>
            <person name="Oztas S."/>
            <person name="Petit M.A."/>
            <person name="Pichon C."/>
            <person name="Rouy Z."/>
            <person name="Ruf C.S."/>
            <person name="Schneider D."/>
            <person name="Tourret J."/>
            <person name="Vacherie B."/>
            <person name="Vallenet D."/>
            <person name="Medigue C."/>
            <person name="Rocha E.P.C."/>
            <person name="Denamur E."/>
        </authorList>
    </citation>
    <scope>NUCLEOTIDE SEQUENCE [LARGE SCALE GENOMIC DNA]</scope>
    <source>
        <strain>IAI1</strain>
    </source>
</reference>
<protein>
    <recommendedName>
        <fullName evidence="1">4-diphosphocytidyl-2-C-methyl-D-erythritol kinase</fullName>
        <shortName evidence="1">CMK</shortName>
        <ecNumber evidence="1">2.7.1.148</ecNumber>
    </recommendedName>
    <alternativeName>
        <fullName evidence="1">4-(cytidine-5'-diphospho)-2-C-methyl-D-erythritol kinase</fullName>
    </alternativeName>
</protein>
<keyword id="KW-0067">ATP-binding</keyword>
<keyword id="KW-0414">Isoprene biosynthesis</keyword>
<keyword id="KW-0418">Kinase</keyword>
<keyword id="KW-0547">Nucleotide-binding</keyword>
<keyword id="KW-0808">Transferase</keyword>